<sequence>MNPEFAMPDVQSTVDTRQMPIQRVGVRAVRHPLTVRTAEGETQATVGTWNLDVHLPADQKGTHMSRFVALLEERGGPLTADAFRTMLATMLEKLEARAGRIEVSFPYFVNKTAPVSGVRSLLDYEVTLTGDVRDGLTRVFAKVLVPVTSLCPCSKKISQYGAHNQRSHVTIDAELAADVPVEDLIRIAEEEASCELWGLLKRPDEKFVTERAYENPKFVEDLVRDVARRLDADERIVAYVLEAENFESIHNHSAYALIERDKRRGA</sequence>
<evidence type="ECO:0000255" key="1">
    <source>
        <dbReference type="HAMAP-Rule" id="MF_01527"/>
    </source>
</evidence>
<name>GCH4_BURMA</name>
<accession>Q62DU0</accession>
<dbReference type="EC" id="3.5.4.16" evidence="1"/>
<dbReference type="EMBL" id="CP000011">
    <property type="protein sequence ID" value="AAU45982.1"/>
    <property type="molecule type" value="Genomic_DNA"/>
</dbReference>
<dbReference type="RefSeq" id="YP_105138.1">
    <property type="nucleotide sequence ID" value="NC_006349.2"/>
</dbReference>
<dbReference type="SMR" id="Q62DU0"/>
<dbReference type="KEGG" id="bma:BMAA0331"/>
<dbReference type="PATRIC" id="fig|243160.12.peg.3826"/>
<dbReference type="eggNOG" id="COG1469">
    <property type="taxonomic scope" value="Bacteria"/>
</dbReference>
<dbReference type="HOGENOM" id="CLU_062816_1_1_4"/>
<dbReference type="UniPathway" id="UPA00848">
    <property type="reaction ID" value="UER00151"/>
</dbReference>
<dbReference type="Proteomes" id="UP000006693">
    <property type="component" value="Chromosome 2"/>
</dbReference>
<dbReference type="GO" id="GO:0003934">
    <property type="term" value="F:GTP cyclohydrolase I activity"/>
    <property type="evidence" value="ECO:0007669"/>
    <property type="project" value="UniProtKB-UniRule"/>
</dbReference>
<dbReference type="GO" id="GO:0046654">
    <property type="term" value="P:tetrahydrofolate biosynthetic process"/>
    <property type="evidence" value="ECO:0007669"/>
    <property type="project" value="UniProtKB-UniRule"/>
</dbReference>
<dbReference type="Gene3D" id="3.10.270.10">
    <property type="entry name" value="Urate Oxidase"/>
    <property type="match status" value="1"/>
</dbReference>
<dbReference type="HAMAP" id="MF_01527_B">
    <property type="entry name" value="GTP_cyclohydrol_B"/>
    <property type="match status" value="1"/>
</dbReference>
<dbReference type="InterPro" id="IPR022838">
    <property type="entry name" value="GTP_cyclohydrolase_FolE2"/>
</dbReference>
<dbReference type="InterPro" id="IPR003801">
    <property type="entry name" value="GTP_cyclohydrolase_FolE2/MptA"/>
</dbReference>
<dbReference type="NCBIfam" id="NF010200">
    <property type="entry name" value="PRK13674.1-1"/>
    <property type="match status" value="1"/>
</dbReference>
<dbReference type="PANTHER" id="PTHR36445">
    <property type="entry name" value="GTP CYCLOHYDROLASE MPTA"/>
    <property type="match status" value="1"/>
</dbReference>
<dbReference type="PANTHER" id="PTHR36445:SF1">
    <property type="entry name" value="GTP CYCLOHYDROLASE MPTA"/>
    <property type="match status" value="1"/>
</dbReference>
<dbReference type="Pfam" id="PF02649">
    <property type="entry name" value="GCHY-1"/>
    <property type="match status" value="1"/>
</dbReference>
<keyword id="KW-0378">Hydrolase</keyword>
<keyword id="KW-1185">Reference proteome</keyword>
<protein>
    <recommendedName>
        <fullName evidence="1">GTP cyclohydrolase FolE2</fullName>
        <ecNumber evidence="1">3.5.4.16</ecNumber>
    </recommendedName>
</protein>
<proteinExistence type="inferred from homology"/>
<feature type="chain" id="PRO_0000147706" description="GTP cyclohydrolase FolE2">
    <location>
        <begin position="1"/>
        <end position="266"/>
    </location>
</feature>
<feature type="site" description="May be catalytically important" evidence="1">
    <location>
        <position position="151"/>
    </location>
</feature>
<reference key="1">
    <citation type="journal article" date="2004" name="Proc. Natl. Acad. Sci. U.S.A.">
        <title>Structural flexibility in the Burkholderia mallei genome.</title>
        <authorList>
            <person name="Nierman W.C."/>
            <person name="DeShazer D."/>
            <person name="Kim H.S."/>
            <person name="Tettelin H."/>
            <person name="Nelson K.E."/>
            <person name="Feldblyum T.V."/>
            <person name="Ulrich R.L."/>
            <person name="Ronning C.M."/>
            <person name="Brinkac L.M."/>
            <person name="Daugherty S.C."/>
            <person name="Davidsen T.D."/>
            <person name="DeBoy R.T."/>
            <person name="Dimitrov G."/>
            <person name="Dodson R.J."/>
            <person name="Durkin A.S."/>
            <person name="Gwinn M.L."/>
            <person name="Haft D.H."/>
            <person name="Khouri H.M."/>
            <person name="Kolonay J.F."/>
            <person name="Madupu R."/>
            <person name="Mohammoud Y."/>
            <person name="Nelson W.C."/>
            <person name="Radune D."/>
            <person name="Romero C.M."/>
            <person name="Sarria S."/>
            <person name="Selengut J."/>
            <person name="Shamblin C."/>
            <person name="Sullivan S.A."/>
            <person name="White O."/>
            <person name="Yu Y."/>
            <person name="Zafar N."/>
            <person name="Zhou L."/>
            <person name="Fraser C.M."/>
        </authorList>
    </citation>
    <scope>NUCLEOTIDE SEQUENCE [LARGE SCALE GENOMIC DNA]</scope>
    <source>
        <strain>ATCC 23344</strain>
    </source>
</reference>
<organism>
    <name type="scientific">Burkholderia mallei (strain ATCC 23344)</name>
    <dbReference type="NCBI Taxonomy" id="243160"/>
    <lineage>
        <taxon>Bacteria</taxon>
        <taxon>Pseudomonadati</taxon>
        <taxon>Pseudomonadota</taxon>
        <taxon>Betaproteobacteria</taxon>
        <taxon>Burkholderiales</taxon>
        <taxon>Burkholderiaceae</taxon>
        <taxon>Burkholderia</taxon>
        <taxon>pseudomallei group</taxon>
    </lineage>
</organism>
<comment type="function">
    <text evidence="1">Converts GTP to 7,8-dihydroneopterin triphosphate.</text>
</comment>
<comment type="catalytic activity">
    <reaction evidence="1">
        <text>GTP + H2O = 7,8-dihydroneopterin 3'-triphosphate + formate + H(+)</text>
        <dbReference type="Rhea" id="RHEA:17473"/>
        <dbReference type="ChEBI" id="CHEBI:15377"/>
        <dbReference type="ChEBI" id="CHEBI:15378"/>
        <dbReference type="ChEBI" id="CHEBI:15740"/>
        <dbReference type="ChEBI" id="CHEBI:37565"/>
        <dbReference type="ChEBI" id="CHEBI:58462"/>
        <dbReference type="EC" id="3.5.4.16"/>
    </reaction>
</comment>
<comment type="pathway">
    <text evidence="1">Cofactor biosynthesis; 7,8-dihydroneopterin triphosphate biosynthesis; 7,8-dihydroneopterin triphosphate from GTP: step 1/1.</text>
</comment>
<comment type="similarity">
    <text evidence="1">Belongs to the GTP cyclohydrolase IV family.</text>
</comment>
<gene>
    <name evidence="1" type="primary">folE2</name>
    <name type="ordered locus">BMAA0331</name>
</gene>